<comment type="function">
    <text evidence="1">Cell wall formation. Catalyzes the addition of glutamate to the nucleotide precursor UDP-N-acetylmuramoyl-L-alanine (UMA).</text>
</comment>
<comment type="catalytic activity">
    <reaction evidence="1">
        <text>UDP-N-acetyl-alpha-D-muramoyl-L-alanine + D-glutamate + ATP = UDP-N-acetyl-alpha-D-muramoyl-L-alanyl-D-glutamate + ADP + phosphate + H(+)</text>
        <dbReference type="Rhea" id="RHEA:16429"/>
        <dbReference type="ChEBI" id="CHEBI:15378"/>
        <dbReference type="ChEBI" id="CHEBI:29986"/>
        <dbReference type="ChEBI" id="CHEBI:30616"/>
        <dbReference type="ChEBI" id="CHEBI:43474"/>
        <dbReference type="ChEBI" id="CHEBI:83898"/>
        <dbReference type="ChEBI" id="CHEBI:83900"/>
        <dbReference type="ChEBI" id="CHEBI:456216"/>
        <dbReference type="EC" id="6.3.2.9"/>
    </reaction>
</comment>
<comment type="pathway">
    <text evidence="1">Cell wall biogenesis; peptidoglycan biosynthesis.</text>
</comment>
<comment type="subcellular location">
    <subcellularLocation>
        <location evidence="1">Cytoplasm</location>
    </subcellularLocation>
</comment>
<comment type="similarity">
    <text evidence="1">Belongs to the MurCDEF family.</text>
</comment>
<reference key="1">
    <citation type="submission" date="2006-06" db="EMBL/GenBank/DDBJ databases">
        <title>Complete sequence of Rubrobacter xylanophilus DSM 9941.</title>
        <authorList>
            <consortium name="US DOE Joint Genome Institute"/>
            <person name="Copeland A."/>
            <person name="Lucas S."/>
            <person name="Lapidus A."/>
            <person name="Barry K."/>
            <person name="Detter J.C."/>
            <person name="Glavina del Rio T."/>
            <person name="Hammon N."/>
            <person name="Israni S."/>
            <person name="Dalin E."/>
            <person name="Tice H."/>
            <person name="Pitluck S."/>
            <person name="Munk A.C."/>
            <person name="Brettin T."/>
            <person name="Bruce D."/>
            <person name="Han C."/>
            <person name="Tapia R."/>
            <person name="Gilna P."/>
            <person name="Schmutz J."/>
            <person name="Larimer F."/>
            <person name="Land M."/>
            <person name="Hauser L."/>
            <person name="Kyrpides N."/>
            <person name="Lykidis A."/>
            <person name="da Costa M.S."/>
            <person name="Rainey F.A."/>
            <person name="Empadinhas N."/>
            <person name="Jolivet E."/>
            <person name="Battista J.R."/>
            <person name="Richardson P."/>
        </authorList>
    </citation>
    <scope>NUCLEOTIDE SEQUENCE [LARGE SCALE GENOMIC DNA]</scope>
    <source>
        <strain>DSM 9941 / JCM 11954 / NBRC 16129 / PRD-1</strain>
    </source>
</reference>
<gene>
    <name evidence="1" type="primary">murD</name>
    <name type="ordered locus">Rxyl_1495</name>
</gene>
<proteinExistence type="inferred from homology"/>
<feature type="chain" id="PRO_0000257233" description="UDP-N-acetylmuramoylalanine--D-glutamate ligase">
    <location>
        <begin position="1"/>
        <end position="440"/>
    </location>
</feature>
<feature type="binding site" evidence="1">
    <location>
        <begin position="109"/>
        <end position="115"/>
    </location>
    <ligand>
        <name>ATP</name>
        <dbReference type="ChEBI" id="CHEBI:30616"/>
    </ligand>
</feature>
<protein>
    <recommendedName>
        <fullName evidence="1">UDP-N-acetylmuramoylalanine--D-glutamate ligase</fullName>
        <ecNumber evidence="1">6.3.2.9</ecNumber>
    </recommendedName>
    <alternativeName>
        <fullName evidence="1">D-glutamic acid-adding enzyme</fullName>
    </alternativeName>
    <alternativeName>
        <fullName evidence="1">UDP-N-acetylmuramoyl-L-alanyl-D-glutamate synthetase</fullName>
    </alternativeName>
</protein>
<dbReference type="EC" id="6.3.2.9" evidence="1"/>
<dbReference type="EMBL" id="CP000386">
    <property type="protein sequence ID" value="ABG04457.1"/>
    <property type="molecule type" value="Genomic_DNA"/>
</dbReference>
<dbReference type="RefSeq" id="WP_011564474.1">
    <property type="nucleotide sequence ID" value="NC_008148.1"/>
</dbReference>
<dbReference type="SMR" id="Q1AVX1"/>
<dbReference type="STRING" id="266117.Rxyl_1495"/>
<dbReference type="KEGG" id="rxy:Rxyl_1495"/>
<dbReference type="eggNOG" id="COG0771">
    <property type="taxonomic scope" value="Bacteria"/>
</dbReference>
<dbReference type="HOGENOM" id="CLU_032540_0_0_11"/>
<dbReference type="OrthoDB" id="9809796at2"/>
<dbReference type="PhylomeDB" id="Q1AVX1"/>
<dbReference type="UniPathway" id="UPA00219"/>
<dbReference type="Proteomes" id="UP000006637">
    <property type="component" value="Chromosome"/>
</dbReference>
<dbReference type="GO" id="GO:0005737">
    <property type="term" value="C:cytoplasm"/>
    <property type="evidence" value="ECO:0007669"/>
    <property type="project" value="UniProtKB-SubCell"/>
</dbReference>
<dbReference type="GO" id="GO:0005524">
    <property type="term" value="F:ATP binding"/>
    <property type="evidence" value="ECO:0007669"/>
    <property type="project" value="UniProtKB-UniRule"/>
</dbReference>
<dbReference type="GO" id="GO:0008764">
    <property type="term" value="F:UDP-N-acetylmuramoylalanine-D-glutamate ligase activity"/>
    <property type="evidence" value="ECO:0007669"/>
    <property type="project" value="UniProtKB-UniRule"/>
</dbReference>
<dbReference type="GO" id="GO:0051301">
    <property type="term" value="P:cell division"/>
    <property type="evidence" value="ECO:0007669"/>
    <property type="project" value="UniProtKB-KW"/>
</dbReference>
<dbReference type="GO" id="GO:0071555">
    <property type="term" value="P:cell wall organization"/>
    <property type="evidence" value="ECO:0007669"/>
    <property type="project" value="UniProtKB-KW"/>
</dbReference>
<dbReference type="GO" id="GO:0009252">
    <property type="term" value="P:peptidoglycan biosynthetic process"/>
    <property type="evidence" value="ECO:0007669"/>
    <property type="project" value="UniProtKB-UniRule"/>
</dbReference>
<dbReference type="GO" id="GO:0008360">
    <property type="term" value="P:regulation of cell shape"/>
    <property type="evidence" value="ECO:0007669"/>
    <property type="project" value="UniProtKB-KW"/>
</dbReference>
<dbReference type="Gene3D" id="3.90.190.20">
    <property type="entry name" value="Mur ligase, C-terminal domain"/>
    <property type="match status" value="1"/>
</dbReference>
<dbReference type="Gene3D" id="3.40.1190.10">
    <property type="entry name" value="Mur-like, catalytic domain"/>
    <property type="match status" value="1"/>
</dbReference>
<dbReference type="Gene3D" id="3.40.50.720">
    <property type="entry name" value="NAD(P)-binding Rossmann-like Domain"/>
    <property type="match status" value="1"/>
</dbReference>
<dbReference type="HAMAP" id="MF_00639">
    <property type="entry name" value="MurD"/>
    <property type="match status" value="1"/>
</dbReference>
<dbReference type="InterPro" id="IPR036565">
    <property type="entry name" value="Mur-like_cat_sf"/>
</dbReference>
<dbReference type="InterPro" id="IPR004101">
    <property type="entry name" value="Mur_ligase_C"/>
</dbReference>
<dbReference type="InterPro" id="IPR036615">
    <property type="entry name" value="Mur_ligase_C_dom_sf"/>
</dbReference>
<dbReference type="InterPro" id="IPR013221">
    <property type="entry name" value="Mur_ligase_cen"/>
</dbReference>
<dbReference type="InterPro" id="IPR005762">
    <property type="entry name" value="MurD"/>
</dbReference>
<dbReference type="NCBIfam" id="TIGR01087">
    <property type="entry name" value="murD"/>
    <property type="match status" value="1"/>
</dbReference>
<dbReference type="PANTHER" id="PTHR43692">
    <property type="entry name" value="UDP-N-ACETYLMURAMOYLALANINE--D-GLUTAMATE LIGASE"/>
    <property type="match status" value="1"/>
</dbReference>
<dbReference type="PANTHER" id="PTHR43692:SF1">
    <property type="entry name" value="UDP-N-ACETYLMURAMOYLALANINE--D-GLUTAMATE LIGASE"/>
    <property type="match status" value="1"/>
</dbReference>
<dbReference type="Pfam" id="PF02875">
    <property type="entry name" value="Mur_ligase_C"/>
    <property type="match status" value="1"/>
</dbReference>
<dbReference type="Pfam" id="PF08245">
    <property type="entry name" value="Mur_ligase_M"/>
    <property type="match status" value="1"/>
</dbReference>
<dbReference type="Pfam" id="PF21799">
    <property type="entry name" value="MurD-like_N"/>
    <property type="match status" value="1"/>
</dbReference>
<dbReference type="SUPFAM" id="SSF51984">
    <property type="entry name" value="MurCD N-terminal domain"/>
    <property type="match status" value="1"/>
</dbReference>
<dbReference type="SUPFAM" id="SSF53623">
    <property type="entry name" value="MurD-like peptide ligases, catalytic domain"/>
    <property type="match status" value="1"/>
</dbReference>
<dbReference type="SUPFAM" id="SSF53244">
    <property type="entry name" value="MurD-like peptide ligases, peptide-binding domain"/>
    <property type="match status" value="1"/>
</dbReference>
<name>MURD_RUBXD</name>
<evidence type="ECO:0000255" key="1">
    <source>
        <dbReference type="HAMAP-Rule" id="MF_00639"/>
    </source>
</evidence>
<accession>Q1AVX1</accession>
<keyword id="KW-0067">ATP-binding</keyword>
<keyword id="KW-0131">Cell cycle</keyword>
<keyword id="KW-0132">Cell division</keyword>
<keyword id="KW-0133">Cell shape</keyword>
<keyword id="KW-0961">Cell wall biogenesis/degradation</keyword>
<keyword id="KW-0963">Cytoplasm</keyword>
<keyword id="KW-0436">Ligase</keyword>
<keyword id="KW-0547">Nucleotide-binding</keyword>
<keyword id="KW-0573">Peptidoglycan synthesis</keyword>
<keyword id="KW-1185">Reference proteome</keyword>
<sequence length="440" mass="46199">MRRTLVYGLGESGEAATRALLQRGERPLAADAASGEGPRRVLEELGVEGVLGAGPEVLDGVDRVVVSPGVRPRDAVLREARRRGIPVISEVGLGLELLGPGVRVAAVTGTNGKTTVVDMARHILRVAGVAHAVAGNSWRALTGCLEEVRRAGVLVLEVSSFQLHHLPPPGFEVAALLNVRPDHLNWHSSFEEYARDKLRVFGGQGPGDLALLSADDPICRRAAGGLRAEVVLVGEGETGVRDGRLLLRGEFLAGERELGFAGGHNLKNALFAAAAAARLGAGLEAIREALRGYRLKPHRMQVVAEEGGVTYIDDSKATNPAAVAAALLSLGGRPAVLILGGSEKETDFEEVLPHLGGCRAVVCQGEAGPRLRDFLSERWGGEVVLAGDLASAVEAARRLARPGDAVLLSPGCASFDQFSGYEERGEAFARLAGGRRAVRG</sequence>
<organism>
    <name type="scientific">Rubrobacter xylanophilus (strain DSM 9941 / JCM 11954 / NBRC 16129 / PRD-1)</name>
    <dbReference type="NCBI Taxonomy" id="266117"/>
    <lineage>
        <taxon>Bacteria</taxon>
        <taxon>Bacillati</taxon>
        <taxon>Actinomycetota</taxon>
        <taxon>Rubrobacteria</taxon>
        <taxon>Rubrobacterales</taxon>
        <taxon>Rubrobacteraceae</taxon>
        <taxon>Rubrobacter</taxon>
    </lineage>
</organism>